<protein>
    <recommendedName>
        <fullName>Thioredoxin</fullName>
        <shortName>Trx</shortName>
    </recommendedName>
</protein>
<keyword id="KW-0903">Direct protein sequencing</keyword>
<keyword id="KW-1015">Disulfide bond</keyword>
<keyword id="KW-0249">Electron transport</keyword>
<keyword id="KW-0676">Redox-active center</keyword>
<keyword id="KW-0813">Transport</keyword>
<proteinExistence type="evidence at protein level"/>
<comment type="function">
    <text>Participates in various redox reactions through the reversible oxidation of its active center dithiol to a disulfide and catalyzes dithiol-disulfide exchange reactions.</text>
</comment>
<comment type="similarity">
    <text evidence="2">Belongs to the thioredoxin family.</text>
</comment>
<name>THIO_PEPAC</name>
<feature type="chain" id="PRO_0000120106" description="Thioredoxin">
    <location>
        <begin position="1"/>
        <end position="110"/>
    </location>
</feature>
<feature type="domain" description="Thioredoxin" evidence="1">
    <location>
        <begin position="2"/>
        <end position="110"/>
    </location>
</feature>
<feature type="disulfide bond" description="Redox-active" evidence="1">
    <location>
        <begin position="33"/>
        <end position="36"/>
    </location>
</feature>
<feature type="sequence conflict" description="In Ref. 2; AA sequence." evidence="2" ref="2">
    <location>
        <position position="2"/>
    </location>
</feature>
<feature type="sequence conflict" description="In Ref. 2; AA sequence." evidence="2" ref="2">
    <original>E</original>
    <variation>I</variation>
    <location>
        <position position="45"/>
    </location>
</feature>
<evidence type="ECO:0000255" key="1">
    <source>
        <dbReference type="PROSITE-ProRule" id="PRU00691"/>
    </source>
</evidence>
<evidence type="ECO:0000305" key="2"/>
<accession>P21610</accession>
<organism>
    <name type="scientific">Peptoclostridium acidaminophilum</name>
    <name type="common">Eubacterium acidaminophilum</name>
    <dbReference type="NCBI Taxonomy" id="1731"/>
    <lineage>
        <taxon>Bacteria</taxon>
        <taxon>Bacillati</taxon>
        <taxon>Bacillota</taxon>
        <taxon>Clostridia</taxon>
        <taxon>Peptostreptococcales</taxon>
        <taxon>Peptoclostridiaceae</taxon>
        <taxon>Peptoclostridium</taxon>
    </lineage>
</organism>
<gene>
    <name type="primary">trxA</name>
</gene>
<sequence length="110" mass="12142">MSALLVEIDKDQFQAEVLEAEGYVLVDYFSDGCVPCKALMPDVEELAAKYEGKVAFRKFNTSSARRLAISQKILGLPTITLYKGGQKVEEVTKDDATRENIDAMIAKHVG</sequence>
<reference key="1">
    <citation type="journal article" date="1993" name="Eur. J. Biochem.">
        <title>Components of glycine reductase from Eubacterium acidaminophilum. Cloning, sequencing and identification of the genes for thioredoxin reductase, thioredoxin and selenoprotein PA.</title>
        <authorList>
            <person name="Luebbers M."/>
            <person name="Andreesen J.R."/>
        </authorList>
    </citation>
    <scope>NUCLEOTIDE SEQUENCE [GENOMIC DNA]</scope>
    <source>
        <strain>ATCC 49065 / DSM 3953 / al-2</strain>
    </source>
</reference>
<reference key="2">
    <citation type="journal article" date="1991" name="J. Bacteriol.">
        <title>Thioredoxin elicits a new dihydrolipoamide dehydrogenase activity by interaction with the electron-transferring flavoprotein in Clostridium litoralis and Eubacterium acidaminophilum.</title>
        <authorList>
            <person name="Meyer M."/>
            <person name="Dietrichs D."/>
            <person name="Schmidt B."/>
            <person name="Andreesen J.R."/>
        </authorList>
    </citation>
    <scope>PROTEIN SEQUENCE OF 1-46</scope>
</reference>
<dbReference type="EMBL" id="L04500">
    <property type="protein sequence ID" value="AAB93304.1"/>
    <property type="molecule type" value="Genomic_DNA"/>
</dbReference>
<dbReference type="PIR" id="S38989">
    <property type="entry name" value="S38989"/>
</dbReference>
<dbReference type="SMR" id="P21610"/>
<dbReference type="GO" id="GO:0005737">
    <property type="term" value="C:cytoplasm"/>
    <property type="evidence" value="ECO:0007669"/>
    <property type="project" value="TreeGrafter"/>
</dbReference>
<dbReference type="GO" id="GO:0015035">
    <property type="term" value="F:protein-disulfide reductase activity"/>
    <property type="evidence" value="ECO:0007669"/>
    <property type="project" value="InterPro"/>
</dbReference>
<dbReference type="CDD" id="cd02947">
    <property type="entry name" value="TRX_family"/>
    <property type="match status" value="1"/>
</dbReference>
<dbReference type="Gene3D" id="3.40.30.10">
    <property type="entry name" value="Glutaredoxin"/>
    <property type="match status" value="1"/>
</dbReference>
<dbReference type="InterPro" id="IPR005746">
    <property type="entry name" value="Thioredoxin"/>
</dbReference>
<dbReference type="InterPro" id="IPR036249">
    <property type="entry name" value="Thioredoxin-like_sf"/>
</dbReference>
<dbReference type="InterPro" id="IPR017937">
    <property type="entry name" value="Thioredoxin_CS"/>
</dbReference>
<dbReference type="InterPro" id="IPR013766">
    <property type="entry name" value="Thioredoxin_domain"/>
</dbReference>
<dbReference type="NCBIfam" id="NF047697">
    <property type="entry name" value="ThioredTrxAClost"/>
    <property type="match status" value="1"/>
</dbReference>
<dbReference type="PANTHER" id="PTHR45663">
    <property type="entry name" value="GEO12009P1"/>
    <property type="match status" value="1"/>
</dbReference>
<dbReference type="PANTHER" id="PTHR45663:SF11">
    <property type="entry name" value="GEO12009P1"/>
    <property type="match status" value="1"/>
</dbReference>
<dbReference type="Pfam" id="PF00085">
    <property type="entry name" value="Thioredoxin"/>
    <property type="match status" value="1"/>
</dbReference>
<dbReference type="PIRSF" id="PIRSF000077">
    <property type="entry name" value="Thioredoxin"/>
    <property type="match status" value="1"/>
</dbReference>
<dbReference type="SUPFAM" id="SSF52833">
    <property type="entry name" value="Thioredoxin-like"/>
    <property type="match status" value="1"/>
</dbReference>
<dbReference type="PROSITE" id="PS00194">
    <property type="entry name" value="THIOREDOXIN_1"/>
    <property type="match status" value="1"/>
</dbReference>
<dbReference type="PROSITE" id="PS51352">
    <property type="entry name" value="THIOREDOXIN_2"/>
    <property type="match status" value="1"/>
</dbReference>